<dbReference type="EMBL" id="GAQE01000033">
    <property type="protein sequence ID" value="JAB84521.1"/>
    <property type="molecule type" value="Transcribed_RNA"/>
</dbReference>
<dbReference type="ArachnoServer" id="AS001717">
    <property type="toxin name" value="U16-barytoxin-Tl1c"/>
</dbReference>
<dbReference type="GO" id="GO:0005576">
    <property type="term" value="C:extracellular region"/>
    <property type="evidence" value="ECO:0007669"/>
    <property type="project" value="UniProtKB-SubCell"/>
</dbReference>
<dbReference type="GO" id="GO:0019871">
    <property type="term" value="F:sodium channel inhibitor activity"/>
    <property type="evidence" value="ECO:0007669"/>
    <property type="project" value="InterPro"/>
</dbReference>
<dbReference type="GO" id="GO:0090729">
    <property type="term" value="F:toxin activity"/>
    <property type="evidence" value="ECO:0007669"/>
    <property type="project" value="UniProtKB-KW"/>
</dbReference>
<dbReference type="InterPro" id="IPR012627">
    <property type="entry name" value="Toxin_22"/>
</dbReference>
<dbReference type="Pfam" id="PF08092">
    <property type="entry name" value="Toxin_22"/>
    <property type="match status" value="1"/>
</dbReference>
<feature type="signal peptide" evidence="2">
    <location>
        <begin position="1"/>
        <end position="20"/>
    </location>
</feature>
<feature type="propeptide" id="PRO_0000435153" evidence="4">
    <location>
        <begin position="21"/>
        <end position="74"/>
    </location>
</feature>
<feature type="chain" id="PRO_0000429237" description="U16-barytoxin-Tl1c">
    <location>
        <begin position="75"/>
        <end position="116"/>
    </location>
</feature>
<feature type="disulfide bond" evidence="1">
    <location>
        <begin position="75"/>
        <end position="90"/>
    </location>
</feature>
<feature type="disulfide bond" evidence="1">
    <location>
        <begin position="82"/>
        <end position="95"/>
    </location>
</feature>
<feature type="disulfide bond" evidence="1">
    <location>
        <begin position="89"/>
        <end position="110"/>
    </location>
</feature>
<name>ICK30_TRILK</name>
<evidence type="ECO:0000250" key="1"/>
<evidence type="ECO:0000255" key="2"/>
<evidence type="ECO:0000303" key="3">
    <source>
    </source>
</evidence>
<evidence type="ECO:0000305" key="4"/>
<reference key="1">
    <citation type="journal article" date="2013" name="Toxins">
        <title>A proteomics and transcriptomics investigation of the venom from the barychelid spider Trittame loki (brush-foot trapdoor).</title>
        <authorList>
            <person name="Undheim E.A."/>
            <person name="Sunagar K."/>
            <person name="Herzig V."/>
            <person name="Kely L."/>
            <person name="Low D.H."/>
            <person name="Jackson T.N."/>
            <person name="Jones A."/>
            <person name="Kurniawan N."/>
            <person name="King G.F."/>
            <person name="Ali S.A."/>
            <person name="Antunes A."/>
            <person name="Ruder T."/>
            <person name="Fry B.G."/>
        </authorList>
    </citation>
    <scope>NUCLEOTIDE SEQUENCE [MRNA]</scope>
    <source>
        <tissue>Venom gland</tissue>
    </source>
</reference>
<keyword id="KW-0165">Cleavage on pair of basic residues</keyword>
<keyword id="KW-1015">Disulfide bond</keyword>
<keyword id="KW-0872">Ion channel impairing toxin</keyword>
<keyword id="KW-0960">Knottin</keyword>
<keyword id="KW-0964">Secreted</keyword>
<keyword id="KW-0732">Signal</keyword>
<keyword id="KW-0800">Toxin</keyword>
<sequence length="116" mass="12988">MKTIIVFLSLLVLATKFGDANEGVNQEQMKEVIQNEFREDFLNEMAAMSLLQQLEAIESTLLEKEADRNSRQKRCNGKNVPCGSNHSPCCSGLSCEETFGYGWLYKSPYCVIPSNG</sequence>
<comment type="function">
    <text evidence="4">Ion channel inhibitor.</text>
</comment>
<comment type="subcellular location">
    <subcellularLocation>
        <location evidence="1">Secreted</location>
    </subcellularLocation>
</comment>
<comment type="tissue specificity">
    <text>Expressed by the venom gland.</text>
</comment>
<comment type="domain">
    <text evidence="1">The presence of a 'disulfide through disulfide knot' structurally defines this protein as a knottin.</text>
</comment>
<comment type="similarity">
    <text evidence="4">Belongs to the neurotoxin 14 (magi-1) family. 06 (ICK-Trit) subfamily.</text>
</comment>
<organism>
    <name type="scientific">Trittame loki</name>
    <name type="common">Brush-footed trapdoor spider</name>
    <dbReference type="NCBI Taxonomy" id="1295018"/>
    <lineage>
        <taxon>Eukaryota</taxon>
        <taxon>Metazoa</taxon>
        <taxon>Ecdysozoa</taxon>
        <taxon>Arthropoda</taxon>
        <taxon>Chelicerata</taxon>
        <taxon>Arachnida</taxon>
        <taxon>Araneae</taxon>
        <taxon>Mygalomorphae</taxon>
        <taxon>Barychelidae</taxon>
        <taxon>Trittame</taxon>
    </lineage>
</organism>
<protein>
    <recommendedName>
        <fullName>U16-barytoxin-Tl1c</fullName>
        <shortName>U16-BATX-Tl1c</shortName>
    </recommendedName>
    <alternativeName>
        <fullName evidence="3">Toxin ICK-30</fullName>
    </alternativeName>
</protein>
<accession>W4VS15</accession>
<proteinExistence type="evidence at transcript level"/>